<organism>
    <name type="scientific">Archaeoglobus fulgidus (strain ATCC 49558 / DSM 4304 / JCM 9628 / NBRC 100126 / VC-16)</name>
    <dbReference type="NCBI Taxonomy" id="224325"/>
    <lineage>
        <taxon>Archaea</taxon>
        <taxon>Methanobacteriati</taxon>
        <taxon>Methanobacteriota</taxon>
        <taxon>Archaeoglobi</taxon>
        <taxon>Archaeoglobales</taxon>
        <taxon>Archaeoglobaceae</taxon>
        <taxon>Archaeoglobus</taxon>
    </lineage>
</organism>
<keyword id="KW-1185">Reference proteome</keyword>
<feature type="chain" id="PRO_0000127850" description="Uncharacterized protein AF_0233">
    <location>
        <begin position="1"/>
        <end position="82"/>
    </location>
</feature>
<feature type="region of interest" description="Disordered" evidence="1">
    <location>
        <begin position="1"/>
        <end position="20"/>
    </location>
</feature>
<name>Y233_ARCFU</name>
<gene>
    <name type="ordered locus">AF_0233</name>
</gene>
<sequence length="82" mass="9242">MMNLSPPFKSPSGSSRAGRRNQLCCRRFRVPGKPLRNSTLKFFLLIRHTGCSRSRSFLEKAIVLSCPSAGLRSKGFSHEECR</sequence>
<proteinExistence type="predicted"/>
<evidence type="ECO:0000256" key="1">
    <source>
        <dbReference type="SAM" id="MobiDB-lite"/>
    </source>
</evidence>
<reference key="1">
    <citation type="journal article" date="1997" name="Nature">
        <title>The complete genome sequence of the hyperthermophilic, sulphate-reducing archaeon Archaeoglobus fulgidus.</title>
        <authorList>
            <person name="Klenk H.-P."/>
            <person name="Clayton R.A."/>
            <person name="Tomb J.-F."/>
            <person name="White O."/>
            <person name="Nelson K.E."/>
            <person name="Ketchum K.A."/>
            <person name="Dodson R.J."/>
            <person name="Gwinn M.L."/>
            <person name="Hickey E.K."/>
            <person name="Peterson J.D."/>
            <person name="Richardson D.L."/>
            <person name="Kerlavage A.R."/>
            <person name="Graham D.E."/>
            <person name="Kyrpides N.C."/>
            <person name="Fleischmann R.D."/>
            <person name="Quackenbush J."/>
            <person name="Lee N.H."/>
            <person name="Sutton G.G."/>
            <person name="Gill S.R."/>
            <person name="Kirkness E.F."/>
            <person name="Dougherty B.A."/>
            <person name="McKenney K."/>
            <person name="Adams M.D."/>
            <person name="Loftus B.J."/>
            <person name="Peterson S.N."/>
            <person name="Reich C.I."/>
            <person name="McNeil L.K."/>
            <person name="Badger J.H."/>
            <person name="Glodek A."/>
            <person name="Zhou L."/>
            <person name="Overbeek R."/>
            <person name="Gocayne J.D."/>
            <person name="Weidman J.F."/>
            <person name="McDonald L.A."/>
            <person name="Utterback T.R."/>
            <person name="Cotton M.D."/>
            <person name="Spriggs T."/>
            <person name="Artiach P."/>
            <person name="Kaine B.P."/>
            <person name="Sykes S.M."/>
            <person name="Sadow P.W."/>
            <person name="D'Andrea K.P."/>
            <person name="Bowman C."/>
            <person name="Fujii C."/>
            <person name="Garland S.A."/>
            <person name="Mason T.M."/>
            <person name="Olsen G.J."/>
            <person name="Fraser C.M."/>
            <person name="Smith H.O."/>
            <person name="Woese C.R."/>
            <person name="Venter J.C."/>
        </authorList>
    </citation>
    <scope>NUCLEOTIDE SEQUENCE [LARGE SCALE GENOMIC DNA]</scope>
    <source>
        <strain>ATCC 49558 / DSM 4304 / JCM 9628 / NBRC 100126 / VC-16</strain>
    </source>
</reference>
<accession>O30006</accession>
<protein>
    <recommendedName>
        <fullName>Uncharacterized protein AF_0233</fullName>
    </recommendedName>
</protein>
<dbReference type="EMBL" id="AE000782">
    <property type="protein sequence ID" value="AAB91013.1"/>
    <property type="molecule type" value="Genomic_DNA"/>
</dbReference>
<dbReference type="PIR" id="A69279">
    <property type="entry name" value="A69279"/>
</dbReference>
<dbReference type="PaxDb" id="224325-AF_0233"/>
<dbReference type="EnsemblBacteria" id="AAB91013">
    <property type="protein sequence ID" value="AAB91013"/>
    <property type="gene ID" value="AF_0233"/>
</dbReference>
<dbReference type="KEGG" id="afu:AF_0233"/>
<dbReference type="HOGENOM" id="CLU_2550046_0_0_2"/>
<dbReference type="Proteomes" id="UP000002199">
    <property type="component" value="Chromosome"/>
</dbReference>